<dbReference type="EC" id="2.3.1.225"/>
<dbReference type="EMBL" id="AAHF01000003">
    <property type="protein sequence ID" value="EAL91725.2"/>
    <property type="molecule type" value="Genomic_DNA"/>
</dbReference>
<dbReference type="RefSeq" id="XP_753763.2">
    <property type="nucleotide sequence ID" value="XM_748670.2"/>
</dbReference>
<dbReference type="FunCoup" id="Q4WUK1">
    <property type="interactions" value="446"/>
</dbReference>
<dbReference type="EnsemblFungi" id="EAL91725">
    <property type="protein sequence ID" value="EAL91725"/>
    <property type="gene ID" value="AFUA_5G08740"/>
</dbReference>
<dbReference type="GeneID" id="3511558"/>
<dbReference type="KEGG" id="afm:AFUA_5G08740"/>
<dbReference type="VEuPathDB" id="FungiDB:Afu5g08740"/>
<dbReference type="eggNOG" id="KOG1315">
    <property type="taxonomic scope" value="Eukaryota"/>
</dbReference>
<dbReference type="HOGENOM" id="CLU_034009_0_0_1"/>
<dbReference type="InParanoid" id="Q4WUK1"/>
<dbReference type="OMA" id="SFYTKDV"/>
<dbReference type="OrthoDB" id="331948at2759"/>
<dbReference type="Proteomes" id="UP000002530">
    <property type="component" value="Chromosome 5"/>
</dbReference>
<dbReference type="GO" id="GO:0005783">
    <property type="term" value="C:endoplasmic reticulum"/>
    <property type="evidence" value="ECO:0000318"/>
    <property type="project" value="GO_Central"/>
</dbReference>
<dbReference type="GO" id="GO:0005794">
    <property type="term" value="C:Golgi apparatus"/>
    <property type="evidence" value="ECO:0000318"/>
    <property type="project" value="GO_Central"/>
</dbReference>
<dbReference type="GO" id="GO:0016020">
    <property type="term" value="C:membrane"/>
    <property type="evidence" value="ECO:0007669"/>
    <property type="project" value="UniProtKB-SubCell"/>
</dbReference>
<dbReference type="GO" id="GO:0019706">
    <property type="term" value="F:protein-cysteine S-palmitoyltransferase activity"/>
    <property type="evidence" value="ECO:0000318"/>
    <property type="project" value="GO_Central"/>
</dbReference>
<dbReference type="GO" id="GO:0006612">
    <property type="term" value="P:protein targeting to membrane"/>
    <property type="evidence" value="ECO:0000318"/>
    <property type="project" value="GO_Central"/>
</dbReference>
<dbReference type="InterPro" id="IPR001594">
    <property type="entry name" value="Palmitoyltrfase_DHHC"/>
</dbReference>
<dbReference type="InterPro" id="IPR039859">
    <property type="entry name" value="PFA4/ZDH16/20/ERF2-like"/>
</dbReference>
<dbReference type="PANTHER" id="PTHR22883:SF23">
    <property type="entry name" value="PALMITOYLTRANSFERASE ZDHHC6"/>
    <property type="match status" value="1"/>
</dbReference>
<dbReference type="PANTHER" id="PTHR22883">
    <property type="entry name" value="ZINC FINGER DHHC DOMAIN CONTAINING PROTEIN"/>
    <property type="match status" value="1"/>
</dbReference>
<dbReference type="Pfam" id="PF01529">
    <property type="entry name" value="DHHC"/>
    <property type="match status" value="1"/>
</dbReference>
<dbReference type="PROSITE" id="PS50216">
    <property type="entry name" value="DHHC"/>
    <property type="match status" value="1"/>
</dbReference>
<reference key="1">
    <citation type="journal article" date="2005" name="Nature">
        <title>Genomic sequence of the pathogenic and allergenic filamentous fungus Aspergillus fumigatus.</title>
        <authorList>
            <person name="Nierman W.C."/>
            <person name="Pain A."/>
            <person name="Anderson M.J."/>
            <person name="Wortman J.R."/>
            <person name="Kim H.S."/>
            <person name="Arroyo J."/>
            <person name="Berriman M."/>
            <person name="Abe K."/>
            <person name="Archer D.B."/>
            <person name="Bermejo C."/>
            <person name="Bennett J.W."/>
            <person name="Bowyer P."/>
            <person name="Chen D."/>
            <person name="Collins M."/>
            <person name="Coulsen R."/>
            <person name="Davies R."/>
            <person name="Dyer P.S."/>
            <person name="Farman M.L."/>
            <person name="Fedorova N."/>
            <person name="Fedorova N.D."/>
            <person name="Feldblyum T.V."/>
            <person name="Fischer R."/>
            <person name="Fosker N."/>
            <person name="Fraser A."/>
            <person name="Garcia J.L."/>
            <person name="Garcia M.J."/>
            <person name="Goble A."/>
            <person name="Goldman G.H."/>
            <person name="Gomi K."/>
            <person name="Griffith-Jones S."/>
            <person name="Gwilliam R."/>
            <person name="Haas B.J."/>
            <person name="Haas H."/>
            <person name="Harris D.E."/>
            <person name="Horiuchi H."/>
            <person name="Huang J."/>
            <person name="Humphray S."/>
            <person name="Jimenez J."/>
            <person name="Keller N."/>
            <person name="Khouri H."/>
            <person name="Kitamoto K."/>
            <person name="Kobayashi T."/>
            <person name="Konzack S."/>
            <person name="Kulkarni R."/>
            <person name="Kumagai T."/>
            <person name="Lafton A."/>
            <person name="Latge J.-P."/>
            <person name="Li W."/>
            <person name="Lord A."/>
            <person name="Lu C."/>
            <person name="Majoros W.H."/>
            <person name="May G.S."/>
            <person name="Miller B.L."/>
            <person name="Mohamoud Y."/>
            <person name="Molina M."/>
            <person name="Monod M."/>
            <person name="Mouyna I."/>
            <person name="Mulligan S."/>
            <person name="Murphy L.D."/>
            <person name="O'Neil S."/>
            <person name="Paulsen I."/>
            <person name="Penalva M.A."/>
            <person name="Pertea M."/>
            <person name="Price C."/>
            <person name="Pritchard B.L."/>
            <person name="Quail M.A."/>
            <person name="Rabbinowitsch E."/>
            <person name="Rawlins N."/>
            <person name="Rajandream M.A."/>
            <person name="Reichard U."/>
            <person name="Renauld H."/>
            <person name="Robson G.D."/>
            <person name="Rodriguez de Cordoba S."/>
            <person name="Rodriguez-Pena J.M."/>
            <person name="Ronning C.M."/>
            <person name="Rutter S."/>
            <person name="Salzberg S.L."/>
            <person name="Sanchez M."/>
            <person name="Sanchez-Ferrero J.C."/>
            <person name="Saunders D."/>
            <person name="Seeger K."/>
            <person name="Squares R."/>
            <person name="Squares S."/>
            <person name="Takeuchi M."/>
            <person name="Tekaia F."/>
            <person name="Turner G."/>
            <person name="Vazquez de Aldana C.R."/>
            <person name="Weidman J."/>
            <person name="White O."/>
            <person name="Woodward J.R."/>
            <person name="Yu J.-H."/>
            <person name="Fraser C.M."/>
            <person name="Galagan J.E."/>
            <person name="Asai K."/>
            <person name="Machida M."/>
            <person name="Hall N."/>
            <person name="Barrell B.G."/>
            <person name="Denning D.W."/>
        </authorList>
    </citation>
    <scope>NUCLEOTIDE SEQUENCE [LARGE SCALE GENOMIC DNA]</scope>
    <source>
        <strain>ATCC MYA-4609 / CBS 101355 / FGSC A1100 / Af293</strain>
    </source>
</reference>
<accession>Q4WUK1</accession>
<name>PFA5_ASPFU</name>
<organism>
    <name type="scientific">Aspergillus fumigatus (strain ATCC MYA-4609 / CBS 101355 / FGSC A1100 / Af293)</name>
    <name type="common">Neosartorya fumigata</name>
    <dbReference type="NCBI Taxonomy" id="330879"/>
    <lineage>
        <taxon>Eukaryota</taxon>
        <taxon>Fungi</taxon>
        <taxon>Dikarya</taxon>
        <taxon>Ascomycota</taxon>
        <taxon>Pezizomycotina</taxon>
        <taxon>Eurotiomycetes</taxon>
        <taxon>Eurotiomycetidae</taxon>
        <taxon>Eurotiales</taxon>
        <taxon>Aspergillaceae</taxon>
        <taxon>Aspergillus</taxon>
        <taxon>Aspergillus subgen. Fumigati</taxon>
    </lineage>
</organism>
<comment type="catalytic activity">
    <reaction>
        <text>L-cysteinyl-[protein] + hexadecanoyl-CoA = S-hexadecanoyl-L-cysteinyl-[protein] + CoA</text>
        <dbReference type="Rhea" id="RHEA:36683"/>
        <dbReference type="Rhea" id="RHEA-COMP:10131"/>
        <dbReference type="Rhea" id="RHEA-COMP:11032"/>
        <dbReference type="ChEBI" id="CHEBI:29950"/>
        <dbReference type="ChEBI" id="CHEBI:57287"/>
        <dbReference type="ChEBI" id="CHEBI:57379"/>
        <dbReference type="ChEBI" id="CHEBI:74151"/>
        <dbReference type="EC" id="2.3.1.225"/>
    </reaction>
</comment>
<comment type="subcellular location">
    <subcellularLocation>
        <location evidence="5">Membrane</location>
        <topology evidence="5">Multi-pass membrane protein</topology>
    </subcellularLocation>
</comment>
<comment type="domain">
    <text evidence="1">The DHHC domain is required for palmitoyltransferase activity.</text>
</comment>
<comment type="PTM">
    <text evidence="1">Autopalmitoylated.</text>
</comment>
<comment type="similarity">
    <text evidence="5">Belongs to the DHHC palmitoyltransferase family. PFA5 subfamily.</text>
</comment>
<proteinExistence type="inferred from homology"/>
<keyword id="KW-0012">Acyltransferase</keyword>
<keyword id="KW-0449">Lipoprotein</keyword>
<keyword id="KW-0472">Membrane</keyword>
<keyword id="KW-0564">Palmitate</keyword>
<keyword id="KW-1185">Reference proteome</keyword>
<keyword id="KW-0808">Transferase</keyword>
<keyword id="KW-0812">Transmembrane</keyword>
<keyword id="KW-1133">Transmembrane helix</keyword>
<protein>
    <recommendedName>
        <fullName>Palmitoyltransferase pfa5</fullName>
        <ecNumber>2.3.1.225</ecNumber>
    </recommendedName>
    <alternativeName>
        <fullName>Protein fatty acyltransferase 5</fullName>
    </alternativeName>
</protein>
<evidence type="ECO:0000250" key="1"/>
<evidence type="ECO:0000255" key="2"/>
<evidence type="ECO:0000255" key="3">
    <source>
        <dbReference type="PROSITE-ProRule" id="PRU00067"/>
    </source>
</evidence>
<evidence type="ECO:0000256" key="4">
    <source>
        <dbReference type="SAM" id="MobiDB-lite"/>
    </source>
</evidence>
<evidence type="ECO:0000305" key="5"/>
<gene>
    <name type="primary">pfa5</name>
    <name type="ORF">AFUA_5G08740</name>
</gene>
<sequence>MARRAADKRVNLAVSRIIPPILIGVFGYASYAITKPLCVDYLIHPAHHYDRRSRSGAGAAILAIYYVLLIPVLATYLRLLYNVVLSPGYLPRGTACTQNQTGSDGSKHRHRRHRRRKSGHHLSKTTEKTDRSDGGDVERGLEYSARAKAYPLDAEGLESFYTKDVFVCQPDGRPVYCSTCCQFKTDRAHHCREVDRCVRKMDHFCPWVGGVVSETSFKFFIQFIVYTMIYCIFVLIVFAIYTAELRREAGRTNVHWIVCLALSSLFGFFTFGVAISSVQLAANNLTTIENLNRRSAVWTLAIRVPRHILSKRWAPTFRTITYPLPPVPPAESEVARESPGGEQHVFAILQTLPGENPFDLGSPLKNIQQVMGFSLLEWLLPIKQSPCADHSSNESAFALGPVVTRLKKEAGLEVSTESESADPVGAAETPQHEQRRGKHRRRN</sequence>
<feature type="chain" id="PRO_0000212974" description="Palmitoyltransferase pfa5">
    <location>
        <begin position="1"/>
        <end position="443"/>
    </location>
</feature>
<feature type="transmembrane region" description="Helical" evidence="2">
    <location>
        <begin position="17"/>
        <end position="37"/>
    </location>
</feature>
<feature type="transmembrane region" description="Helical" evidence="2">
    <location>
        <begin position="57"/>
        <end position="77"/>
    </location>
</feature>
<feature type="transmembrane region" description="Helical" evidence="2">
    <location>
        <begin position="220"/>
        <end position="240"/>
    </location>
</feature>
<feature type="transmembrane region" description="Helical" evidence="2">
    <location>
        <begin position="256"/>
        <end position="276"/>
    </location>
</feature>
<feature type="domain" description="DHHC" evidence="3">
    <location>
        <begin position="175"/>
        <end position="225"/>
    </location>
</feature>
<feature type="region of interest" description="Disordered" evidence="4">
    <location>
        <begin position="96"/>
        <end position="137"/>
    </location>
</feature>
<feature type="region of interest" description="Disordered" evidence="4">
    <location>
        <begin position="410"/>
        <end position="443"/>
    </location>
</feature>
<feature type="compositionally biased region" description="Basic residues" evidence="4">
    <location>
        <begin position="107"/>
        <end position="123"/>
    </location>
</feature>
<feature type="compositionally biased region" description="Basic and acidic residues" evidence="4">
    <location>
        <begin position="124"/>
        <end position="137"/>
    </location>
</feature>